<protein>
    <recommendedName>
        <fullName evidence="1">Serine hydroxymethyltransferase</fullName>
        <shortName evidence="1">SHMT</shortName>
        <shortName evidence="1">Serine methylase</shortName>
        <ecNumber evidence="1">2.1.2.1</ecNumber>
    </recommendedName>
</protein>
<accession>B0TJY5</accession>
<comment type="function">
    <text evidence="1">Catalyzes the reversible interconversion of serine and glycine with tetrahydrofolate (THF) serving as the one-carbon carrier. This reaction serves as the major source of one-carbon groups required for the biosynthesis of purines, thymidylate, methionine, and other important biomolecules. Also exhibits THF-independent aldolase activity toward beta-hydroxyamino acids, producing glycine and aldehydes, via a retro-aldol mechanism.</text>
</comment>
<comment type="catalytic activity">
    <reaction evidence="1">
        <text>(6R)-5,10-methylene-5,6,7,8-tetrahydrofolate + glycine + H2O = (6S)-5,6,7,8-tetrahydrofolate + L-serine</text>
        <dbReference type="Rhea" id="RHEA:15481"/>
        <dbReference type="ChEBI" id="CHEBI:15377"/>
        <dbReference type="ChEBI" id="CHEBI:15636"/>
        <dbReference type="ChEBI" id="CHEBI:33384"/>
        <dbReference type="ChEBI" id="CHEBI:57305"/>
        <dbReference type="ChEBI" id="CHEBI:57453"/>
        <dbReference type="EC" id="2.1.2.1"/>
    </reaction>
</comment>
<comment type="cofactor">
    <cofactor evidence="1">
        <name>pyridoxal 5'-phosphate</name>
        <dbReference type="ChEBI" id="CHEBI:597326"/>
    </cofactor>
</comment>
<comment type="pathway">
    <text evidence="1">One-carbon metabolism; tetrahydrofolate interconversion.</text>
</comment>
<comment type="pathway">
    <text evidence="1">Amino-acid biosynthesis; glycine biosynthesis; glycine from L-serine: step 1/1.</text>
</comment>
<comment type="subunit">
    <text evidence="1">Homodimer.</text>
</comment>
<comment type="subcellular location">
    <subcellularLocation>
        <location evidence="1">Cytoplasm</location>
    </subcellularLocation>
</comment>
<comment type="similarity">
    <text evidence="1">Belongs to the SHMT family.</text>
</comment>
<feature type="chain" id="PRO_1000074908" description="Serine hydroxymethyltransferase">
    <location>
        <begin position="1"/>
        <end position="418"/>
    </location>
</feature>
<feature type="binding site" evidence="1">
    <location>
        <position position="121"/>
    </location>
    <ligand>
        <name>(6S)-5,6,7,8-tetrahydrofolate</name>
        <dbReference type="ChEBI" id="CHEBI:57453"/>
    </ligand>
</feature>
<feature type="binding site" evidence="1">
    <location>
        <begin position="125"/>
        <end position="127"/>
    </location>
    <ligand>
        <name>(6S)-5,6,7,8-tetrahydrofolate</name>
        <dbReference type="ChEBI" id="CHEBI:57453"/>
    </ligand>
</feature>
<feature type="binding site" evidence="1">
    <location>
        <begin position="356"/>
        <end position="358"/>
    </location>
    <ligand>
        <name>(6S)-5,6,7,8-tetrahydrofolate</name>
        <dbReference type="ChEBI" id="CHEBI:57453"/>
    </ligand>
</feature>
<feature type="site" description="Plays an important role in substrate specificity" evidence="1">
    <location>
        <position position="229"/>
    </location>
</feature>
<feature type="modified residue" description="N6-(pyridoxal phosphate)lysine" evidence="1">
    <location>
        <position position="230"/>
    </location>
</feature>
<keyword id="KW-0028">Amino-acid biosynthesis</keyword>
<keyword id="KW-0963">Cytoplasm</keyword>
<keyword id="KW-0554">One-carbon metabolism</keyword>
<keyword id="KW-0663">Pyridoxal phosphate</keyword>
<keyword id="KW-0808">Transferase</keyword>
<dbReference type="EC" id="2.1.2.1" evidence="1"/>
<dbReference type="EMBL" id="CP000931">
    <property type="protein sequence ID" value="ABZ75772.1"/>
    <property type="molecule type" value="Genomic_DNA"/>
</dbReference>
<dbReference type="RefSeq" id="WP_012276314.1">
    <property type="nucleotide sequence ID" value="NC_010334.1"/>
</dbReference>
<dbReference type="SMR" id="B0TJY5"/>
<dbReference type="STRING" id="458817.Shal_1203"/>
<dbReference type="KEGG" id="shl:Shal_1203"/>
<dbReference type="eggNOG" id="COG0112">
    <property type="taxonomic scope" value="Bacteria"/>
</dbReference>
<dbReference type="HOGENOM" id="CLU_022477_2_1_6"/>
<dbReference type="OrthoDB" id="9803846at2"/>
<dbReference type="UniPathway" id="UPA00193"/>
<dbReference type="UniPathway" id="UPA00288">
    <property type="reaction ID" value="UER01023"/>
</dbReference>
<dbReference type="Proteomes" id="UP000001317">
    <property type="component" value="Chromosome"/>
</dbReference>
<dbReference type="GO" id="GO:0005829">
    <property type="term" value="C:cytosol"/>
    <property type="evidence" value="ECO:0007669"/>
    <property type="project" value="TreeGrafter"/>
</dbReference>
<dbReference type="GO" id="GO:0004372">
    <property type="term" value="F:glycine hydroxymethyltransferase activity"/>
    <property type="evidence" value="ECO:0007669"/>
    <property type="project" value="UniProtKB-UniRule"/>
</dbReference>
<dbReference type="GO" id="GO:0030170">
    <property type="term" value="F:pyridoxal phosphate binding"/>
    <property type="evidence" value="ECO:0007669"/>
    <property type="project" value="UniProtKB-UniRule"/>
</dbReference>
<dbReference type="GO" id="GO:0019264">
    <property type="term" value="P:glycine biosynthetic process from serine"/>
    <property type="evidence" value="ECO:0007669"/>
    <property type="project" value="UniProtKB-UniRule"/>
</dbReference>
<dbReference type="GO" id="GO:0035999">
    <property type="term" value="P:tetrahydrofolate interconversion"/>
    <property type="evidence" value="ECO:0007669"/>
    <property type="project" value="UniProtKB-UniRule"/>
</dbReference>
<dbReference type="CDD" id="cd00378">
    <property type="entry name" value="SHMT"/>
    <property type="match status" value="1"/>
</dbReference>
<dbReference type="FunFam" id="3.40.640.10:FF:000001">
    <property type="entry name" value="Serine hydroxymethyltransferase"/>
    <property type="match status" value="1"/>
</dbReference>
<dbReference type="FunFam" id="3.90.1150.10:FF:000003">
    <property type="entry name" value="Serine hydroxymethyltransferase"/>
    <property type="match status" value="1"/>
</dbReference>
<dbReference type="Gene3D" id="3.90.1150.10">
    <property type="entry name" value="Aspartate Aminotransferase, domain 1"/>
    <property type="match status" value="1"/>
</dbReference>
<dbReference type="Gene3D" id="3.40.640.10">
    <property type="entry name" value="Type I PLP-dependent aspartate aminotransferase-like (Major domain)"/>
    <property type="match status" value="1"/>
</dbReference>
<dbReference type="HAMAP" id="MF_00051">
    <property type="entry name" value="SHMT"/>
    <property type="match status" value="1"/>
</dbReference>
<dbReference type="InterPro" id="IPR015424">
    <property type="entry name" value="PyrdxlP-dep_Trfase"/>
</dbReference>
<dbReference type="InterPro" id="IPR015421">
    <property type="entry name" value="PyrdxlP-dep_Trfase_major"/>
</dbReference>
<dbReference type="InterPro" id="IPR015422">
    <property type="entry name" value="PyrdxlP-dep_Trfase_small"/>
</dbReference>
<dbReference type="InterPro" id="IPR001085">
    <property type="entry name" value="Ser_HO-MeTrfase"/>
</dbReference>
<dbReference type="InterPro" id="IPR049943">
    <property type="entry name" value="Ser_HO-MeTrfase-like"/>
</dbReference>
<dbReference type="InterPro" id="IPR019798">
    <property type="entry name" value="Ser_HO-MeTrfase_PLP_BS"/>
</dbReference>
<dbReference type="InterPro" id="IPR039429">
    <property type="entry name" value="SHMT-like_dom"/>
</dbReference>
<dbReference type="NCBIfam" id="NF000586">
    <property type="entry name" value="PRK00011.1"/>
    <property type="match status" value="1"/>
</dbReference>
<dbReference type="PANTHER" id="PTHR11680">
    <property type="entry name" value="SERINE HYDROXYMETHYLTRANSFERASE"/>
    <property type="match status" value="1"/>
</dbReference>
<dbReference type="PANTHER" id="PTHR11680:SF50">
    <property type="entry name" value="SERINE HYDROXYMETHYLTRANSFERASE"/>
    <property type="match status" value="1"/>
</dbReference>
<dbReference type="Pfam" id="PF00464">
    <property type="entry name" value="SHMT"/>
    <property type="match status" value="1"/>
</dbReference>
<dbReference type="PIRSF" id="PIRSF000412">
    <property type="entry name" value="SHMT"/>
    <property type="match status" value="1"/>
</dbReference>
<dbReference type="SUPFAM" id="SSF53383">
    <property type="entry name" value="PLP-dependent transferases"/>
    <property type="match status" value="1"/>
</dbReference>
<dbReference type="PROSITE" id="PS00096">
    <property type="entry name" value="SHMT"/>
    <property type="match status" value="1"/>
</dbReference>
<sequence length="418" mass="45290">MLKKDMNIADYDPQLFAAIEDETRRQEEHIELIASENYTSPRVLEAQGTQLTNKYAEGYPGKRYYGGCEHVDIVEELAISRAKELFGATYANVQPHSGSQANAAVFMALLQGGDTVLGMSLAHGGHLTHGSHVSFSGKLYNAVQYGIDETTGKIDYAEVERLAVEHKPKMIIAGFSAYSGIVDWGKFREIADKVGAYLFVDMAHVAGLVAAGIYPSPMPHAHVVTTTTHKTLAGPRGGLILSAINDEDIYKKLNSAVFPGGQGGPLMHVIAAKAVAFKEALDPEFTTYQEQVVVNAKAMARTFIERGYDVVSGGTDNHLFLLDLISKDITGKDADAALGNANITVNKNSVPNDPRSPFVTSGLRIGSPAITRRGFGEEESVQLTHWMCDILDDISDLAVSERVKAQVLELCARFPVYG</sequence>
<gene>
    <name evidence="1" type="primary">glyA</name>
    <name type="ordered locus">Shal_1203</name>
</gene>
<name>GLYA_SHEHH</name>
<reference key="1">
    <citation type="submission" date="2008-01" db="EMBL/GenBank/DDBJ databases">
        <title>Complete sequence of Shewanella halifaxensis HAW-EB4.</title>
        <authorList>
            <consortium name="US DOE Joint Genome Institute"/>
            <person name="Copeland A."/>
            <person name="Lucas S."/>
            <person name="Lapidus A."/>
            <person name="Glavina del Rio T."/>
            <person name="Dalin E."/>
            <person name="Tice H."/>
            <person name="Bruce D."/>
            <person name="Goodwin L."/>
            <person name="Pitluck S."/>
            <person name="Sims D."/>
            <person name="Brettin T."/>
            <person name="Detter J.C."/>
            <person name="Han C."/>
            <person name="Kuske C.R."/>
            <person name="Schmutz J."/>
            <person name="Larimer F."/>
            <person name="Land M."/>
            <person name="Hauser L."/>
            <person name="Kyrpides N."/>
            <person name="Kim E."/>
            <person name="Zhao J.-S."/>
            <person name="Richardson P."/>
        </authorList>
    </citation>
    <scope>NUCLEOTIDE SEQUENCE [LARGE SCALE GENOMIC DNA]</scope>
    <source>
        <strain>HAW-EB4</strain>
    </source>
</reference>
<proteinExistence type="inferred from homology"/>
<organism>
    <name type="scientific">Shewanella halifaxensis (strain HAW-EB4)</name>
    <dbReference type="NCBI Taxonomy" id="458817"/>
    <lineage>
        <taxon>Bacteria</taxon>
        <taxon>Pseudomonadati</taxon>
        <taxon>Pseudomonadota</taxon>
        <taxon>Gammaproteobacteria</taxon>
        <taxon>Alteromonadales</taxon>
        <taxon>Shewanellaceae</taxon>
        <taxon>Shewanella</taxon>
    </lineage>
</organism>
<evidence type="ECO:0000255" key="1">
    <source>
        <dbReference type="HAMAP-Rule" id="MF_00051"/>
    </source>
</evidence>